<keyword id="KW-0004">4Fe-4S</keyword>
<keyword id="KW-0067">ATP-binding</keyword>
<keyword id="KW-0963">Cytoplasm</keyword>
<keyword id="KW-0408">Iron</keyword>
<keyword id="KW-0411">Iron-sulfur</keyword>
<keyword id="KW-0479">Metal-binding</keyword>
<keyword id="KW-0547">Nucleotide-binding</keyword>
<keyword id="KW-1185">Reference proteome</keyword>
<protein>
    <recommendedName>
        <fullName evidence="1">Cytosolic Fe-S cluster assembly factor NUBP1 homolog</fullName>
    </recommendedName>
</protein>
<sequence>MSSAEVTAAAKPADAPEHCPGTASESAGKASACAGCPNQQICATGPKGPDPSIALVKEKLREVRNKVLVLSGKGGVGKSTVTALLSRAMAQHNPDRNFGVLDIDICGPSQPRVLGVLGEQVHQSGSGWSPVYIEDNLSLMSIGFLLGSPDDAIIWRGPKKNGMIRQFLTEVDWGQLDYLVLDTPPGTSDEHLSAATFLKVTDGRWGAVLVTTPQEVALLDVRKEITFCKKMAIPVVGVVENMSVFVCPKCATESDIFPAKTGGAERMCADMEVRYLGKLPLDPRLAKCCDEGKDFLAEHAGSPTVTALKGIVARVQEFFETDRLTCTCVKRVLT</sequence>
<gene>
    <name type="ORF">CPIJ014142</name>
</gene>
<proteinExistence type="inferred from homology"/>
<evidence type="ECO:0000255" key="1">
    <source>
        <dbReference type="HAMAP-Rule" id="MF_03038"/>
    </source>
</evidence>
<evidence type="ECO:0000256" key="2">
    <source>
        <dbReference type="SAM" id="MobiDB-lite"/>
    </source>
</evidence>
<comment type="function">
    <text evidence="1">Component of the cytosolic iron-sulfur (Fe/S) protein assembly (CIA) machinery. Required for maturation of extramitochondrial Fe-S proteins. The NUBP1-NUBP2 heterotetramer forms a Fe-S scaffold complex, mediating the de novo assembly of an Fe-S cluster and its transfer to target apoproteins.</text>
</comment>
<comment type="cofactor">
    <cofactor evidence="1">
        <name>[4Fe-4S] cluster</name>
        <dbReference type="ChEBI" id="CHEBI:49883"/>
    </cofactor>
    <text evidence="1">Binds 4 [4Fe-4S] clusters per heterotetramer. Contains two stable clusters in the N-termini of NUBP1 and two labile, bridging clusters between subunits of the NUBP1-NUBP2 heterotetramer.</text>
</comment>
<comment type="subunit">
    <text evidence="1">Heterotetramer of 2 NUBP1 and 2 NUBP2 chains.</text>
</comment>
<comment type="subcellular location">
    <subcellularLocation>
        <location evidence="1">Cytoplasm</location>
    </subcellularLocation>
</comment>
<comment type="similarity">
    <text evidence="1">Belongs to the Mrp/NBP35 ATP-binding proteins family. NUBP1/NBP35 subfamily.</text>
</comment>
<feature type="chain" id="PRO_0000382600" description="Cytosolic Fe-S cluster assembly factor NUBP1 homolog">
    <location>
        <begin position="1"/>
        <end position="334"/>
    </location>
</feature>
<feature type="region of interest" description="Disordered" evidence="2">
    <location>
        <begin position="1"/>
        <end position="24"/>
    </location>
</feature>
<feature type="binding site" evidence="1">
    <location>
        <position position="19"/>
    </location>
    <ligand>
        <name>[4Fe-4S] cluster</name>
        <dbReference type="ChEBI" id="CHEBI:49883"/>
        <label>1</label>
    </ligand>
</feature>
<feature type="binding site" evidence="1">
    <location>
        <position position="33"/>
    </location>
    <ligand>
        <name>[4Fe-4S] cluster</name>
        <dbReference type="ChEBI" id="CHEBI:49883"/>
        <label>1</label>
    </ligand>
</feature>
<feature type="binding site" evidence="1">
    <location>
        <position position="36"/>
    </location>
    <ligand>
        <name>[4Fe-4S] cluster</name>
        <dbReference type="ChEBI" id="CHEBI:49883"/>
        <label>1</label>
    </ligand>
</feature>
<feature type="binding site" evidence="1">
    <location>
        <position position="42"/>
    </location>
    <ligand>
        <name>[4Fe-4S] cluster</name>
        <dbReference type="ChEBI" id="CHEBI:49883"/>
        <label>1</label>
    </ligand>
</feature>
<feature type="binding site" evidence="1">
    <location>
        <begin position="72"/>
        <end position="79"/>
    </location>
    <ligand>
        <name>ATP</name>
        <dbReference type="ChEBI" id="CHEBI:30616"/>
    </ligand>
</feature>
<feature type="binding site" evidence="1">
    <location>
        <position position="247"/>
    </location>
    <ligand>
        <name>[4Fe-4S] cluster</name>
        <dbReference type="ChEBI" id="CHEBI:49883"/>
        <label>2</label>
        <note>ligand shared with heterodimeric partner</note>
    </ligand>
</feature>
<feature type="binding site" evidence="1">
    <location>
        <position position="250"/>
    </location>
    <ligand>
        <name>[4Fe-4S] cluster</name>
        <dbReference type="ChEBI" id="CHEBI:49883"/>
        <label>2</label>
        <note>ligand shared with heterodimeric partner</note>
    </ligand>
</feature>
<name>NUBP1_CULQU</name>
<reference key="1">
    <citation type="submission" date="2007-03" db="EMBL/GenBank/DDBJ databases">
        <title>Annotation of Culex pipiens quinquefasciatus.</title>
        <authorList>
            <consortium name="The Broad Institute Genome Sequencing Platform"/>
            <person name="Atkinson P.W."/>
            <person name="Hemingway J."/>
            <person name="Christensen B.M."/>
            <person name="Higgs S."/>
            <person name="Kodira C.D."/>
            <person name="Hannick L.I."/>
            <person name="Megy K."/>
            <person name="O'Leary S.B."/>
            <person name="Pearson M."/>
            <person name="Haas B.J."/>
            <person name="Mauceli E."/>
            <person name="Wortman J.R."/>
            <person name="Lee N.H."/>
            <person name="Guigo R."/>
            <person name="Stanke M."/>
            <person name="Alvarado L."/>
            <person name="Amedeo P."/>
            <person name="Antoine C.H."/>
            <person name="Arensburger P."/>
            <person name="Bidwell S.L."/>
            <person name="Crawford M."/>
            <person name="Camaro F."/>
            <person name="Devon K."/>
            <person name="Engels R."/>
            <person name="Hammond M."/>
            <person name="Howarth C."/>
            <person name="Koehrsen M."/>
            <person name="Lawson D."/>
            <person name="Montgomery P."/>
            <person name="Nene V."/>
            <person name="Nusbaum C."/>
            <person name="Puiu D."/>
            <person name="Romero-Severson J."/>
            <person name="Severson D.W."/>
            <person name="Shumway M."/>
            <person name="Sisk P."/>
            <person name="Stolte C."/>
            <person name="Zeng Q."/>
            <person name="Eisenstadt E."/>
            <person name="Fraser-Liggett C.M."/>
            <person name="Strausberg R."/>
            <person name="Galagan J."/>
            <person name="Birren B."/>
            <person name="Collins F.H."/>
        </authorList>
    </citation>
    <scope>NUCLEOTIDE SEQUENCE [LARGE SCALE GENOMIC DNA]</scope>
    <source>
        <strain>JHB</strain>
    </source>
</reference>
<organism>
    <name type="scientific">Culex quinquefasciatus</name>
    <name type="common">Southern house mosquito</name>
    <name type="synonym">Culex pungens</name>
    <dbReference type="NCBI Taxonomy" id="7176"/>
    <lineage>
        <taxon>Eukaryota</taxon>
        <taxon>Metazoa</taxon>
        <taxon>Ecdysozoa</taxon>
        <taxon>Arthropoda</taxon>
        <taxon>Hexapoda</taxon>
        <taxon>Insecta</taxon>
        <taxon>Pterygota</taxon>
        <taxon>Neoptera</taxon>
        <taxon>Endopterygota</taxon>
        <taxon>Diptera</taxon>
        <taxon>Nematocera</taxon>
        <taxon>Culicoidea</taxon>
        <taxon>Culicidae</taxon>
        <taxon>Culicinae</taxon>
        <taxon>Culicini</taxon>
        <taxon>Culex</taxon>
        <taxon>Culex</taxon>
    </lineage>
</organism>
<accession>B0X4N8</accession>
<dbReference type="EMBL" id="DS232349">
    <property type="protein sequence ID" value="EDS40455.1"/>
    <property type="molecule type" value="Genomic_DNA"/>
</dbReference>
<dbReference type="RefSeq" id="XP_001864610.1">
    <property type="nucleotide sequence ID" value="XM_001864575.1"/>
</dbReference>
<dbReference type="SMR" id="B0X4N8"/>
<dbReference type="FunCoup" id="B0X4N8">
    <property type="interactions" value="795"/>
</dbReference>
<dbReference type="STRING" id="7176.B0X4N8"/>
<dbReference type="EnsemblMetazoa" id="CPIJ014142-RA">
    <property type="protein sequence ID" value="CPIJ014142-PA"/>
    <property type="gene ID" value="CPIJ014142"/>
</dbReference>
<dbReference type="KEGG" id="cqu:CpipJ_CPIJ014142"/>
<dbReference type="CTD" id="4682"/>
<dbReference type="VEuPathDB" id="VectorBase:CPIJ014142"/>
<dbReference type="VEuPathDB" id="VectorBase:CQUJHB001321"/>
<dbReference type="eggNOG" id="KOG3022">
    <property type="taxonomic scope" value="Eukaryota"/>
</dbReference>
<dbReference type="HOGENOM" id="CLU_024839_0_1_1"/>
<dbReference type="InParanoid" id="B0X4N8"/>
<dbReference type="OMA" id="VSGCPMR"/>
<dbReference type="OrthoDB" id="1741334at2759"/>
<dbReference type="PhylomeDB" id="B0X4N8"/>
<dbReference type="Proteomes" id="UP000002320">
    <property type="component" value="Unassembled WGS sequence"/>
</dbReference>
<dbReference type="GO" id="GO:0005829">
    <property type="term" value="C:cytosol"/>
    <property type="evidence" value="ECO:0000250"/>
    <property type="project" value="UniProtKB"/>
</dbReference>
<dbReference type="GO" id="GO:0051539">
    <property type="term" value="F:4 iron, 4 sulfur cluster binding"/>
    <property type="evidence" value="ECO:0007669"/>
    <property type="project" value="UniProtKB-UniRule"/>
</dbReference>
<dbReference type="GO" id="GO:0005524">
    <property type="term" value="F:ATP binding"/>
    <property type="evidence" value="ECO:0007669"/>
    <property type="project" value="UniProtKB-KW"/>
</dbReference>
<dbReference type="GO" id="GO:0140663">
    <property type="term" value="F:ATP-dependent FeS chaperone activity"/>
    <property type="evidence" value="ECO:0007669"/>
    <property type="project" value="InterPro"/>
</dbReference>
<dbReference type="GO" id="GO:0051536">
    <property type="term" value="F:iron-sulfur cluster binding"/>
    <property type="evidence" value="ECO:0000250"/>
    <property type="project" value="UniProtKB"/>
</dbReference>
<dbReference type="GO" id="GO:0046872">
    <property type="term" value="F:metal ion binding"/>
    <property type="evidence" value="ECO:0007669"/>
    <property type="project" value="UniProtKB-KW"/>
</dbReference>
<dbReference type="GO" id="GO:0016226">
    <property type="term" value="P:iron-sulfur cluster assembly"/>
    <property type="evidence" value="ECO:0000250"/>
    <property type="project" value="UniProtKB"/>
</dbReference>
<dbReference type="CDD" id="cd02037">
    <property type="entry name" value="Mrp_NBP35"/>
    <property type="match status" value="1"/>
</dbReference>
<dbReference type="FunFam" id="3.40.50.300:FF:000427">
    <property type="entry name" value="Cytosolic Fe-S cluster assembly factor NUBP1"/>
    <property type="match status" value="1"/>
</dbReference>
<dbReference type="Gene3D" id="3.40.50.300">
    <property type="entry name" value="P-loop containing nucleotide triphosphate hydrolases"/>
    <property type="match status" value="1"/>
</dbReference>
<dbReference type="HAMAP" id="MF_02040">
    <property type="entry name" value="Mrp_NBP35"/>
    <property type="match status" value="1"/>
</dbReference>
<dbReference type="HAMAP" id="MF_03038">
    <property type="entry name" value="NUBP1"/>
    <property type="match status" value="1"/>
</dbReference>
<dbReference type="InterPro" id="IPR000808">
    <property type="entry name" value="Mrp-like_CS"/>
</dbReference>
<dbReference type="InterPro" id="IPR019591">
    <property type="entry name" value="Mrp/NBP35_ATP-bd"/>
</dbReference>
<dbReference type="InterPro" id="IPR028601">
    <property type="entry name" value="NUBP1/Nbp35"/>
</dbReference>
<dbReference type="InterPro" id="IPR027417">
    <property type="entry name" value="P-loop_NTPase"/>
</dbReference>
<dbReference type="InterPro" id="IPR033756">
    <property type="entry name" value="YlxH/NBP35"/>
</dbReference>
<dbReference type="PANTHER" id="PTHR23264:SF35">
    <property type="entry name" value="CYTOSOLIC FE-S CLUSTER ASSEMBLY FACTOR NUBP1"/>
    <property type="match status" value="1"/>
</dbReference>
<dbReference type="PANTHER" id="PTHR23264">
    <property type="entry name" value="NUCLEOTIDE-BINDING PROTEIN NBP35 YEAST -RELATED"/>
    <property type="match status" value="1"/>
</dbReference>
<dbReference type="Pfam" id="PF10609">
    <property type="entry name" value="ParA"/>
    <property type="match status" value="1"/>
</dbReference>
<dbReference type="SUPFAM" id="SSF52540">
    <property type="entry name" value="P-loop containing nucleoside triphosphate hydrolases"/>
    <property type="match status" value="1"/>
</dbReference>
<dbReference type="PROSITE" id="PS01215">
    <property type="entry name" value="MRP"/>
    <property type="match status" value="1"/>
</dbReference>